<name>MURD_RHIEC</name>
<proteinExistence type="inferred from homology"/>
<evidence type="ECO:0000255" key="1">
    <source>
        <dbReference type="HAMAP-Rule" id="MF_00639"/>
    </source>
</evidence>
<reference key="1">
    <citation type="journal article" date="2006" name="Proc. Natl. Acad. Sci. U.S.A.">
        <title>The partitioned Rhizobium etli genome: genetic and metabolic redundancy in seven interacting replicons.</title>
        <authorList>
            <person name="Gonzalez V."/>
            <person name="Santamaria R.I."/>
            <person name="Bustos P."/>
            <person name="Hernandez-Gonzalez I."/>
            <person name="Medrano-Soto A."/>
            <person name="Moreno-Hagelsieb G."/>
            <person name="Janga S.C."/>
            <person name="Ramirez M.A."/>
            <person name="Jimenez-Jacinto V."/>
            <person name="Collado-Vides J."/>
            <person name="Davila G."/>
        </authorList>
    </citation>
    <scope>NUCLEOTIDE SEQUENCE [LARGE SCALE GENOMIC DNA]</scope>
    <source>
        <strain>ATCC 51251 / DSM 11541 / JCM 21823 / NBRC 15573 / CFN 42</strain>
    </source>
</reference>
<feature type="chain" id="PRO_0000257223" description="UDP-N-acetylmuramoylalanine--D-glutamate ligase">
    <location>
        <begin position="1"/>
        <end position="470"/>
    </location>
</feature>
<feature type="binding site" evidence="1">
    <location>
        <begin position="121"/>
        <end position="127"/>
    </location>
    <ligand>
        <name>ATP</name>
        <dbReference type="ChEBI" id="CHEBI:30616"/>
    </ligand>
</feature>
<accession>Q2K6B9</accession>
<organism>
    <name type="scientific">Rhizobium etli (strain ATCC 51251 / DSM 11541 / JCM 21823 / NBRC 15573 / CFN 42)</name>
    <dbReference type="NCBI Taxonomy" id="347834"/>
    <lineage>
        <taxon>Bacteria</taxon>
        <taxon>Pseudomonadati</taxon>
        <taxon>Pseudomonadota</taxon>
        <taxon>Alphaproteobacteria</taxon>
        <taxon>Hyphomicrobiales</taxon>
        <taxon>Rhizobiaceae</taxon>
        <taxon>Rhizobium/Agrobacterium group</taxon>
        <taxon>Rhizobium</taxon>
    </lineage>
</organism>
<gene>
    <name evidence="1" type="primary">murD</name>
    <name type="ordered locus">RHE_CH02849</name>
</gene>
<comment type="function">
    <text evidence="1">Cell wall formation. Catalyzes the addition of glutamate to the nucleotide precursor UDP-N-acetylmuramoyl-L-alanine (UMA).</text>
</comment>
<comment type="catalytic activity">
    <reaction evidence="1">
        <text>UDP-N-acetyl-alpha-D-muramoyl-L-alanine + D-glutamate + ATP = UDP-N-acetyl-alpha-D-muramoyl-L-alanyl-D-glutamate + ADP + phosphate + H(+)</text>
        <dbReference type="Rhea" id="RHEA:16429"/>
        <dbReference type="ChEBI" id="CHEBI:15378"/>
        <dbReference type="ChEBI" id="CHEBI:29986"/>
        <dbReference type="ChEBI" id="CHEBI:30616"/>
        <dbReference type="ChEBI" id="CHEBI:43474"/>
        <dbReference type="ChEBI" id="CHEBI:83898"/>
        <dbReference type="ChEBI" id="CHEBI:83900"/>
        <dbReference type="ChEBI" id="CHEBI:456216"/>
        <dbReference type="EC" id="6.3.2.9"/>
    </reaction>
</comment>
<comment type="pathway">
    <text evidence="1">Cell wall biogenesis; peptidoglycan biosynthesis.</text>
</comment>
<comment type="subcellular location">
    <subcellularLocation>
        <location evidence="1">Cytoplasm</location>
    </subcellularLocation>
</comment>
<comment type="similarity">
    <text evidence="1">Belongs to the MurCDEF family.</text>
</comment>
<sequence>MIPVTTLKDRKVALFGLGGSGFATARALIAGGAEVTAWDDNPDSVAKASAEGIRTEDLHGIDWSQQALFVLSPGVPLTHPKPHWTVDLARAAGVDIVGDVELFVRERRAHAPDCPFIAITGTNGKSTTTALIAHILKSAGYDTQLGGNIGTAVLTLDPPKAGRYYVVECSSYQIDLAPTLNPSAGILLNLTPDHLDRHGTMQHYADVKERLVAGSDVAIVGIDDSHSALIADRVERAGVKVVRISRRNAVASGIYAEGIRLVQAVGGAMLPFADLDGIQTLRGSHNAQNAAAAVAACLAVGVSADAIRAGLASFPGLKHRMQPVGKRGRVVFVNDSKATNADAAAPALSSYDRIYWIAGGLPKAGGITTLAPYFPRIAKAYLIGEAAAEFAATLGEAVPYEISGTLERAVAHAAADAERDEAAASAVMLSPACASFDQYRNFEVRGDAFVSHVAALDGMTMLIGPATGEK</sequence>
<protein>
    <recommendedName>
        <fullName evidence="1">UDP-N-acetylmuramoylalanine--D-glutamate ligase</fullName>
        <ecNumber evidence="1">6.3.2.9</ecNumber>
    </recommendedName>
    <alternativeName>
        <fullName evidence="1">D-glutamic acid-adding enzyme</fullName>
    </alternativeName>
    <alternativeName>
        <fullName evidence="1">UDP-N-acetylmuramoyl-L-alanyl-D-glutamate synthetase</fullName>
    </alternativeName>
</protein>
<dbReference type="EC" id="6.3.2.9" evidence="1"/>
<dbReference type="EMBL" id="CP000133">
    <property type="protein sequence ID" value="ABC91617.1"/>
    <property type="molecule type" value="Genomic_DNA"/>
</dbReference>
<dbReference type="RefSeq" id="WP_011426094.1">
    <property type="nucleotide sequence ID" value="NC_007761.1"/>
</dbReference>
<dbReference type="SMR" id="Q2K6B9"/>
<dbReference type="KEGG" id="ret:RHE_CH02849"/>
<dbReference type="eggNOG" id="COG0771">
    <property type="taxonomic scope" value="Bacteria"/>
</dbReference>
<dbReference type="HOGENOM" id="CLU_032540_3_0_5"/>
<dbReference type="OrthoDB" id="9809796at2"/>
<dbReference type="UniPathway" id="UPA00219"/>
<dbReference type="Proteomes" id="UP000001936">
    <property type="component" value="Chromosome"/>
</dbReference>
<dbReference type="GO" id="GO:0005737">
    <property type="term" value="C:cytoplasm"/>
    <property type="evidence" value="ECO:0007669"/>
    <property type="project" value="UniProtKB-SubCell"/>
</dbReference>
<dbReference type="GO" id="GO:0005524">
    <property type="term" value="F:ATP binding"/>
    <property type="evidence" value="ECO:0007669"/>
    <property type="project" value="UniProtKB-UniRule"/>
</dbReference>
<dbReference type="GO" id="GO:0004326">
    <property type="term" value="F:tetrahydrofolylpolyglutamate synthase activity"/>
    <property type="evidence" value="ECO:0007669"/>
    <property type="project" value="InterPro"/>
</dbReference>
<dbReference type="GO" id="GO:0008764">
    <property type="term" value="F:UDP-N-acetylmuramoylalanine-D-glutamate ligase activity"/>
    <property type="evidence" value="ECO:0007669"/>
    <property type="project" value="UniProtKB-UniRule"/>
</dbReference>
<dbReference type="GO" id="GO:0051301">
    <property type="term" value="P:cell division"/>
    <property type="evidence" value="ECO:0007669"/>
    <property type="project" value="UniProtKB-KW"/>
</dbReference>
<dbReference type="GO" id="GO:0071555">
    <property type="term" value="P:cell wall organization"/>
    <property type="evidence" value="ECO:0007669"/>
    <property type="project" value="UniProtKB-KW"/>
</dbReference>
<dbReference type="GO" id="GO:0009252">
    <property type="term" value="P:peptidoglycan biosynthetic process"/>
    <property type="evidence" value="ECO:0007669"/>
    <property type="project" value="UniProtKB-UniRule"/>
</dbReference>
<dbReference type="GO" id="GO:0008360">
    <property type="term" value="P:regulation of cell shape"/>
    <property type="evidence" value="ECO:0007669"/>
    <property type="project" value="UniProtKB-KW"/>
</dbReference>
<dbReference type="Gene3D" id="3.90.190.20">
    <property type="entry name" value="Mur ligase, C-terminal domain"/>
    <property type="match status" value="1"/>
</dbReference>
<dbReference type="Gene3D" id="3.40.1190.10">
    <property type="entry name" value="Mur-like, catalytic domain"/>
    <property type="match status" value="1"/>
</dbReference>
<dbReference type="Gene3D" id="3.40.50.720">
    <property type="entry name" value="NAD(P)-binding Rossmann-like Domain"/>
    <property type="match status" value="1"/>
</dbReference>
<dbReference type="HAMAP" id="MF_00639">
    <property type="entry name" value="MurD"/>
    <property type="match status" value="1"/>
</dbReference>
<dbReference type="InterPro" id="IPR018109">
    <property type="entry name" value="Folylpolyglutamate_synth_CS"/>
</dbReference>
<dbReference type="InterPro" id="IPR036565">
    <property type="entry name" value="Mur-like_cat_sf"/>
</dbReference>
<dbReference type="InterPro" id="IPR036615">
    <property type="entry name" value="Mur_ligase_C_dom_sf"/>
</dbReference>
<dbReference type="InterPro" id="IPR013221">
    <property type="entry name" value="Mur_ligase_cen"/>
</dbReference>
<dbReference type="InterPro" id="IPR005762">
    <property type="entry name" value="MurD"/>
</dbReference>
<dbReference type="NCBIfam" id="TIGR01087">
    <property type="entry name" value="murD"/>
    <property type="match status" value="1"/>
</dbReference>
<dbReference type="PANTHER" id="PTHR43692">
    <property type="entry name" value="UDP-N-ACETYLMURAMOYLALANINE--D-GLUTAMATE LIGASE"/>
    <property type="match status" value="1"/>
</dbReference>
<dbReference type="PANTHER" id="PTHR43692:SF1">
    <property type="entry name" value="UDP-N-ACETYLMURAMOYLALANINE--D-GLUTAMATE LIGASE"/>
    <property type="match status" value="1"/>
</dbReference>
<dbReference type="Pfam" id="PF08245">
    <property type="entry name" value="Mur_ligase_M"/>
    <property type="match status" value="1"/>
</dbReference>
<dbReference type="SUPFAM" id="SSF51984">
    <property type="entry name" value="MurCD N-terminal domain"/>
    <property type="match status" value="1"/>
</dbReference>
<dbReference type="SUPFAM" id="SSF53623">
    <property type="entry name" value="MurD-like peptide ligases, catalytic domain"/>
    <property type="match status" value="1"/>
</dbReference>
<dbReference type="SUPFAM" id="SSF53244">
    <property type="entry name" value="MurD-like peptide ligases, peptide-binding domain"/>
    <property type="match status" value="1"/>
</dbReference>
<keyword id="KW-0067">ATP-binding</keyword>
<keyword id="KW-0131">Cell cycle</keyword>
<keyword id="KW-0132">Cell division</keyword>
<keyword id="KW-0133">Cell shape</keyword>
<keyword id="KW-0961">Cell wall biogenesis/degradation</keyword>
<keyword id="KW-0963">Cytoplasm</keyword>
<keyword id="KW-0436">Ligase</keyword>
<keyword id="KW-0547">Nucleotide-binding</keyword>
<keyword id="KW-0573">Peptidoglycan synthesis</keyword>
<keyword id="KW-1185">Reference proteome</keyword>